<keyword id="KW-0007">Acetylation</keyword>
<keyword id="KW-0025">Alternative splicing</keyword>
<keyword id="KW-0175">Coiled coil</keyword>
<keyword id="KW-0931">ER-Golgi transport</keyword>
<keyword id="KW-0333">Golgi apparatus</keyword>
<keyword id="KW-0472">Membrane</keyword>
<keyword id="KW-0597">Phosphoprotein</keyword>
<keyword id="KW-0653">Protein transport</keyword>
<keyword id="KW-1267">Proteomics identification</keyword>
<keyword id="KW-1185">Reference proteome</keyword>
<keyword id="KW-0812">Transmembrane</keyword>
<keyword id="KW-1133">Transmembrane helix</keyword>
<keyword id="KW-0813">Transport</keyword>
<comment type="function">
    <text evidence="4 9">Involved in transport from the ER to the Golgi apparatus as well as in intra-Golgi transport. It belongs to a super-family of proteins called t-SNAREs or soluble NSF (N-ethylmaleimide-sensitive factor) attachment protein receptor. May play a protective role against hydrogen peroxide induced cytotoxicity under glutathione depleted conditions in neuronal cells by regulating the intracellular ROS levels via inhibition of p38 MAPK (MAPK11, MAPK12, MAPK13 and MAPK14). Participates in docking and fusion stage of ER to cis-Golgi transport. Plays an important physiological role in VLDL-transport vesicle-Golgi fusion and thus in VLDL delivery to the hepatic cis-Golgi.</text>
</comment>
<comment type="subunit">
    <text evidence="1">Component of several multiprotein Golgi SNARE complexes. Identified in a SNARE complex with BET1, STX5 and YKT6, in a SNARE complex with BET1L, STX5 and YKT6, in a SNARE complex with STX5, GOSR2, SEC22B and BET1, and in complex with STX5 and COG3. Interacts with GABARAPL2 (By similarity).</text>
</comment>
<comment type="subcellular location">
    <subcellularLocation>
        <location evidence="4 5 6 7 8">Golgi apparatus membrane</location>
        <topology evidence="4 5 6 7 8">Single-pass type IV membrane protein</topology>
    </subcellularLocation>
    <text evidence="1">Localizes throughout the Golgi apparatus, with lowest levels in the trans-Golgi network (By similarity). Enriched on vesicular components at the terminal rims of the Golgi. Found in Golgi microtubules at low temperature (15 degrees Celsius).</text>
</comment>
<comment type="alternative products">
    <event type="alternative splicing"/>
    <isoform>
        <id>O95249-1</id>
        <name>1</name>
        <sequence type="displayed"/>
    </isoform>
    <isoform>
        <id>O95249-2</id>
        <name>2</name>
        <sequence type="described" ref="VSP_047326"/>
    </isoform>
</comment>
<comment type="induction">
    <text evidence="7 8 9">Expression induced by hydrogen peroxide in neuronal cells. By monocrotaline in pulmonary epithelial cells (at protein level). Negatively regulated by OSBPL7 via GABARAPL2 leading to degradation on proteasomes (at protein level).</text>
</comment>
<comment type="similarity">
    <text evidence="10">Belongs to the GOSR1 family.</text>
</comment>
<evidence type="ECO:0000250" key="1"/>
<evidence type="ECO:0000255" key="2"/>
<evidence type="ECO:0000256" key="3">
    <source>
        <dbReference type="SAM" id="MobiDB-lite"/>
    </source>
</evidence>
<evidence type="ECO:0000269" key="4">
    <source>
    </source>
</evidence>
<evidence type="ECO:0000269" key="5">
    <source>
    </source>
</evidence>
<evidence type="ECO:0000269" key="6">
    <source>
    </source>
</evidence>
<evidence type="ECO:0000269" key="7">
    <source>
    </source>
</evidence>
<evidence type="ECO:0000269" key="8">
    <source>
    </source>
</evidence>
<evidence type="ECO:0000269" key="9">
    <source>
    </source>
</evidence>
<evidence type="ECO:0000305" key="10"/>
<evidence type="ECO:0007744" key="11">
    <source>
    </source>
</evidence>
<evidence type="ECO:0007744" key="12">
    <source>
    </source>
</evidence>
<evidence type="ECO:0007744" key="13">
    <source>
    </source>
</evidence>
<dbReference type="EMBL" id="AF047438">
    <property type="protein sequence ID" value="AAC39889.1"/>
    <property type="molecule type" value="mRNA"/>
</dbReference>
<dbReference type="EMBL" id="AF073926">
    <property type="protein sequence ID" value="AAD12945.1"/>
    <property type="molecule type" value="mRNA"/>
</dbReference>
<dbReference type="EMBL" id="AC006050">
    <property type="status" value="NOT_ANNOTATED_CDS"/>
    <property type="molecule type" value="Genomic_DNA"/>
</dbReference>
<dbReference type="EMBL" id="AC011840">
    <property type="status" value="NOT_ANNOTATED_CDS"/>
    <property type="molecule type" value="Genomic_DNA"/>
</dbReference>
<dbReference type="EMBL" id="CH471159">
    <property type="protein sequence ID" value="EAW51229.1"/>
    <property type="molecule type" value="Genomic_DNA"/>
</dbReference>
<dbReference type="EMBL" id="BC040471">
    <property type="protein sequence ID" value="AAH40471.1"/>
    <property type="molecule type" value="mRNA"/>
</dbReference>
<dbReference type="CCDS" id="CCDS11258.1">
    <molecule id="O95249-1"/>
</dbReference>
<dbReference type="CCDS" id="CCDS45644.1">
    <molecule id="O95249-2"/>
</dbReference>
<dbReference type="RefSeq" id="NP_001007025.1">
    <molecule id="O95249-2"/>
    <property type="nucleotide sequence ID" value="NM_001007024.2"/>
</dbReference>
<dbReference type="RefSeq" id="NP_001007026.1">
    <property type="nucleotide sequence ID" value="NM_001007025.1"/>
</dbReference>
<dbReference type="RefSeq" id="NP_004862.1">
    <molecule id="O95249-1"/>
    <property type="nucleotide sequence ID" value="NM_004871.3"/>
</dbReference>
<dbReference type="RefSeq" id="XP_005258129.1">
    <molecule id="O95249-2"/>
    <property type="nucleotide sequence ID" value="XM_005258072.4"/>
</dbReference>
<dbReference type="RefSeq" id="XP_047293066.1">
    <molecule id="O95249-2"/>
    <property type="nucleotide sequence ID" value="XM_047437110.1"/>
</dbReference>
<dbReference type="RefSeq" id="XP_047293067.1">
    <molecule id="O95249-2"/>
    <property type="nucleotide sequence ID" value="XM_047437111.1"/>
</dbReference>
<dbReference type="RefSeq" id="XP_054173860.1">
    <molecule id="O95249-2"/>
    <property type="nucleotide sequence ID" value="XM_054317885.1"/>
</dbReference>
<dbReference type="RefSeq" id="XP_054173861.1">
    <molecule id="O95249-2"/>
    <property type="nucleotide sequence ID" value="XM_054317886.1"/>
</dbReference>
<dbReference type="RefSeq" id="XP_054173862.1">
    <molecule id="O95249-2"/>
    <property type="nucleotide sequence ID" value="XM_054317887.1"/>
</dbReference>
<dbReference type="SMR" id="O95249"/>
<dbReference type="BioGRID" id="114903">
    <property type="interactions" value="346"/>
</dbReference>
<dbReference type="FunCoup" id="O95249">
    <property type="interactions" value="3596"/>
</dbReference>
<dbReference type="IntAct" id="O95249">
    <property type="interactions" value="73"/>
</dbReference>
<dbReference type="MINT" id="O95249"/>
<dbReference type="STRING" id="9606.ENSP00000225724"/>
<dbReference type="TCDB" id="8.A.216.1.1">
    <property type="family name" value="the golgi snap receptor complex, member 1 (gosr1) family"/>
</dbReference>
<dbReference type="GlyGen" id="O95249">
    <property type="glycosylation" value="1 site, 1 O-linked glycan (1 site)"/>
</dbReference>
<dbReference type="iPTMnet" id="O95249"/>
<dbReference type="MetOSite" id="O95249"/>
<dbReference type="PhosphoSitePlus" id="O95249"/>
<dbReference type="SwissPalm" id="O95249"/>
<dbReference type="BioMuta" id="GOSR1"/>
<dbReference type="jPOST" id="O95249"/>
<dbReference type="MassIVE" id="O95249"/>
<dbReference type="PaxDb" id="9606-ENSP00000225724"/>
<dbReference type="PeptideAtlas" id="O95249"/>
<dbReference type="ProteomicsDB" id="50745">
    <molecule id="O95249-1"/>
</dbReference>
<dbReference type="Pumba" id="O95249"/>
<dbReference type="Antibodypedia" id="15149">
    <property type="antibodies" value="187 antibodies from 29 providers"/>
</dbReference>
<dbReference type="DNASU" id="9527"/>
<dbReference type="Ensembl" id="ENST00000225724.9">
    <molecule id="O95249-1"/>
    <property type="protein sequence ID" value="ENSP00000225724.5"/>
    <property type="gene ID" value="ENSG00000108587.16"/>
</dbReference>
<dbReference type="Ensembl" id="ENST00000467337.6">
    <molecule id="O95249-2"/>
    <property type="protein sequence ID" value="ENSP00000462638.1"/>
    <property type="gene ID" value="ENSG00000108587.16"/>
</dbReference>
<dbReference type="GeneID" id="9527"/>
<dbReference type="KEGG" id="hsa:9527"/>
<dbReference type="UCSC" id="uc002hfe.4">
    <molecule id="O95249-1"/>
    <property type="organism name" value="human"/>
</dbReference>
<dbReference type="AGR" id="HGNC:4430"/>
<dbReference type="CTD" id="9527"/>
<dbReference type="DisGeNET" id="9527"/>
<dbReference type="GeneCards" id="GOSR1"/>
<dbReference type="HGNC" id="HGNC:4430">
    <property type="gene designation" value="GOSR1"/>
</dbReference>
<dbReference type="HPA" id="ENSG00000108587">
    <property type="expression patterns" value="Low tissue specificity"/>
</dbReference>
<dbReference type="MIM" id="604026">
    <property type="type" value="gene"/>
</dbReference>
<dbReference type="neXtProt" id="NX_O95249"/>
<dbReference type="OpenTargets" id="ENSG00000108587"/>
<dbReference type="PharmGKB" id="PA28815"/>
<dbReference type="VEuPathDB" id="HostDB:ENSG00000108587"/>
<dbReference type="eggNOG" id="KOG3208">
    <property type="taxonomic scope" value="Eukaryota"/>
</dbReference>
<dbReference type="GeneTree" id="ENSGT00390000008688"/>
<dbReference type="HOGENOM" id="CLU_078034_0_0_1"/>
<dbReference type="InParanoid" id="O95249"/>
<dbReference type="OMA" id="QAYAVND"/>
<dbReference type="OrthoDB" id="422156at2759"/>
<dbReference type="PAN-GO" id="O95249">
    <property type="GO annotations" value="7 GO annotations based on evolutionary models"/>
</dbReference>
<dbReference type="PhylomeDB" id="O95249"/>
<dbReference type="TreeFam" id="TF105782"/>
<dbReference type="PathwayCommons" id="O95249"/>
<dbReference type="Reactome" id="R-HSA-6807878">
    <property type="pathway name" value="COPI-mediated anterograde transport"/>
</dbReference>
<dbReference type="Reactome" id="R-HSA-6811438">
    <property type="pathway name" value="Intra-Golgi traffic"/>
</dbReference>
<dbReference type="SignaLink" id="O95249"/>
<dbReference type="BioGRID-ORCS" id="9527">
    <property type="hits" value="39 hits in 1161 CRISPR screens"/>
</dbReference>
<dbReference type="ChiTaRS" id="GOSR1">
    <property type="organism name" value="human"/>
</dbReference>
<dbReference type="GeneWiki" id="GOSR1"/>
<dbReference type="GenomeRNAi" id="9527"/>
<dbReference type="Pharos" id="O95249">
    <property type="development level" value="Tbio"/>
</dbReference>
<dbReference type="PRO" id="PR:O95249"/>
<dbReference type="Proteomes" id="UP000005640">
    <property type="component" value="Chromosome 17"/>
</dbReference>
<dbReference type="RNAct" id="O95249">
    <property type="molecule type" value="protein"/>
</dbReference>
<dbReference type="Bgee" id="ENSG00000108587">
    <property type="expression patterns" value="Expressed in buccal mucosa cell and 216 other cell types or tissues"/>
</dbReference>
<dbReference type="ExpressionAtlas" id="O95249">
    <property type="expression patterns" value="baseline and differential"/>
</dbReference>
<dbReference type="GO" id="GO:0005801">
    <property type="term" value="C:cis-Golgi network"/>
    <property type="evidence" value="ECO:0007669"/>
    <property type="project" value="InterPro"/>
</dbReference>
<dbReference type="GO" id="GO:0005829">
    <property type="term" value="C:cytosol"/>
    <property type="evidence" value="ECO:0007669"/>
    <property type="project" value="GOC"/>
</dbReference>
<dbReference type="GO" id="GO:0005794">
    <property type="term" value="C:Golgi apparatus"/>
    <property type="evidence" value="ECO:0000314"/>
    <property type="project" value="UniProtKB"/>
</dbReference>
<dbReference type="GO" id="GO:0005797">
    <property type="term" value="C:Golgi medial cisterna"/>
    <property type="evidence" value="ECO:0000318"/>
    <property type="project" value="GO_Central"/>
</dbReference>
<dbReference type="GO" id="GO:0000139">
    <property type="term" value="C:Golgi membrane"/>
    <property type="evidence" value="ECO:0000314"/>
    <property type="project" value="BHF-UCL"/>
</dbReference>
<dbReference type="GO" id="GO:0016020">
    <property type="term" value="C:membrane"/>
    <property type="evidence" value="ECO:0007005"/>
    <property type="project" value="UniProtKB"/>
</dbReference>
<dbReference type="GO" id="GO:0031201">
    <property type="term" value="C:SNARE complex"/>
    <property type="evidence" value="ECO:0000318"/>
    <property type="project" value="GO_Central"/>
</dbReference>
<dbReference type="GO" id="GO:0030133">
    <property type="term" value="C:transport vesicle"/>
    <property type="evidence" value="ECO:0000304"/>
    <property type="project" value="Reactome"/>
</dbReference>
<dbReference type="GO" id="GO:0005484">
    <property type="term" value="F:SNAP receptor activity"/>
    <property type="evidence" value="ECO:0000314"/>
    <property type="project" value="HGNC-UCL"/>
</dbReference>
<dbReference type="GO" id="GO:0006888">
    <property type="term" value="P:endoplasmic reticulum to Golgi vesicle-mediated transport"/>
    <property type="evidence" value="ECO:0000318"/>
    <property type="project" value="GO_Central"/>
</dbReference>
<dbReference type="GO" id="GO:0048219">
    <property type="term" value="P:inter-Golgi cisterna vesicle-mediated transport"/>
    <property type="evidence" value="ECO:0000318"/>
    <property type="project" value="GO_Central"/>
</dbReference>
<dbReference type="GO" id="GO:0006891">
    <property type="term" value="P:intra-Golgi vesicle-mediated transport"/>
    <property type="evidence" value="ECO:0000304"/>
    <property type="project" value="ProtInc"/>
</dbReference>
<dbReference type="GO" id="GO:0015031">
    <property type="term" value="P:protein transport"/>
    <property type="evidence" value="ECO:0007669"/>
    <property type="project" value="UniProtKB-KW"/>
</dbReference>
<dbReference type="GO" id="GO:0042147">
    <property type="term" value="P:retrograde transport, endosome to Golgi"/>
    <property type="evidence" value="ECO:0000314"/>
    <property type="project" value="HGNC-UCL"/>
</dbReference>
<dbReference type="GO" id="GO:0006906">
    <property type="term" value="P:vesicle fusion"/>
    <property type="evidence" value="ECO:0000318"/>
    <property type="project" value="GO_Central"/>
</dbReference>
<dbReference type="CDD" id="cd15864">
    <property type="entry name" value="SNARE_GS28"/>
    <property type="match status" value="1"/>
</dbReference>
<dbReference type="InterPro" id="IPR023601">
    <property type="entry name" value="Golgi_SNAP_su1"/>
</dbReference>
<dbReference type="PANTHER" id="PTHR21094:SF2">
    <property type="entry name" value="GOLGI SNAP RECEPTOR COMPLEX MEMBER 1"/>
    <property type="match status" value="1"/>
</dbReference>
<dbReference type="PANTHER" id="PTHR21094">
    <property type="entry name" value="GOS-28 SNARE- RELATED"/>
    <property type="match status" value="1"/>
</dbReference>
<dbReference type="Pfam" id="PF12352">
    <property type="entry name" value="V-SNARE_C"/>
    <property type="match status" value="1"/>
</dbReference>
<dbReference type="PIRSF" id="PIRSF027109">
    <property type="entry name" value="Golgi_SNARE"/>
    <property type="match status" value="1"/>
</dbReference>
<protein>
    <recommendedName>
        <fullName>Golgi SNAP receptor complex member 1</fullName>
    </recommendedName>
    <alternativeName>
        <fullName>28 kDa Golgi SNARE protein</fullName>
    </alternativeName>
    <alternativeName>
        <fullName>28 kDa cis-Golgi SNARE p28</fullName>
        <shortName>GOS-28</shortName>
    </alternativeName>
</protein>
<sequence>MAAGTSSYWEDLRKQARQLENELDLKLVSFSKLCTSYSHSSTRDGRRDRYSSDTTPLLNGSSQDRMFETMAIEIEQLLARLTGVNDKMAEYTNSAGVPSLNAALMHTLQRHRDILQDYTHEFHKTKANFMAIRERENLMGSVRKDIESYKSGSGVNNRRTELFLKEHDHLRNSDRLIEETISIAMATKENMTSQRGMLKSIHSKMNTLANRFPAVNSLIQRINLRKRRDSLILGGVIGICTILLLLYAFH</sequence>
<reference key="1">
    <citation type="journal article" date="1998" name="Proc. Natl. Acad. Sci. U.S.A.">
        <title>Identification of genes expressed in human CD34(+) hematopoietic stem/progenitor cells by expressed sequence tags and efficient full-length cDNA cloning.</title>
        <authorList>
            <person name="Mao M."/>
            <person name="Fu G."/>
            <person name="Wu J.-S."/>
            <person name="Zhang Q.-H."/>
            <person name="Zhou J."/>
            <person name="Kan L.-X."/>
            <person name="Huang Q.-H."/>
            <person name="He K.-L."/>
            <person name="Gu B.-W."/>
            <person name="Han Z.-G."/>
            <person name="Shen Y."/>
            <person name="Gu J."/>
            <person name="Yu Y.-P."/>
            <person name="Xu S.-H."/>
            <person name="Wang Y.-X."/>
            <person name="Chen S.-J."/>
            <person name="Chen Z."/>
        </authorList>
    </citation>
    <scope>NUCLEOTIDE SEQUENCE [LARGE SCALE MRNA] (ISOFORM 1)</scope>
    <source>
        <tissue>Umbilical cord blood</tissue>
    </source>
</reference>
<reference key="2">
    <citation type="journal article" date="1999" name="Genomics">
        <title>cDNA characterization and chromosomal mapping of human Golgi SNARE GS27 and GS28 to chromosome 17.</title>
        <authorList>
            <person name="Bui T.D."/>
            <person name="Levy E.R."/>
            <person name="Subramaniam V.N."/>
            <person name="Lowe S.L."/>
            <person name="Hong W."/>
        </authorList>
    </citation>
    <scope>NUCLEOTIDE SEQUENCE [MRNA] (ISOFORM 1)</scope>
    <source>
        <tissue>Colon carcinoma</tissue>
    </source>
</reference>
<reference key="3">
    <citation type="journal article" date="2006" name="Nature">
        <title>DNA sequence of human chromosome 17 and analysis of rearrangement in the human lineage.</title>
        <authorList>
            <person name="Zody M.C."/>
            <person name="Garber M."/>
            <person name="Adams D.J."/>
            <person name="Sharpe T."/>
            <person name="Harrow J."/>
            <person name="Lupski J.R."/>
            <person name="Nicholson C."/>
            <person name="Searle S.M."/>
            <person name="Wilming L."/>
            <person name="Young S.K."/>
            <person name="Abouelleil A."/>
            <person name="Allen N.R."/>
            <person name="Bi W."/>
            <person name="Bloom T."/>
            <person name="Borowsky M.L."/>
            <person name="Bugalter B.E."/>
            <person name="Butler J."/>
            <person name="Chang J.L."/>
            <person name="Chen C.-K."/>
            <person name="Cook A."/>
            <person name="Corum B."/>
            <person name="Cuomo C.A."/>
            <person name="de Jong P.J."/>
            <person name="DeCaprio D."/>
            <person name="Dewar K."/>
            <person name="FitzGerald M."/>
            <person name="Gilbert J."/>
            <person name="Gibson R."/>
            <person name="Gnerre S."/>
            <person name="Goldstein S."/>
            <person name="Grafham D.V."/>
            <person name="Grocock R."/>
            <person name="Hafez N."/>
            <person name="Hagopian D.S."/>
            <person name="Hart E."/>
            <person name="Norman C.H."/>
            <person name="Humphray S."/>
            <person name="Jaffe D.B."/>
            <person name="Jones M."/>
            <person name="Kamal M."/>
            <person name="Khodiyar V.K."/>
            <person name="LaButti K."/>
            <person name="Laird G."/>
            <person name="Lehoczky J."/>
            <person name="Liu X."/>
            <person name="Lokyitsang T."/>
            <person name="Loveland J."/>
            <person name="Lui A."/>
            <person name="Macdonald P."/>
            <person name="Major J.E."/>
            <person name="Matthews L."/>
            <person name="Mauceli E."/>
            <person name="McCarroll S.A."/>
            <person name="Mihalev A.H."/>
            <person name="Mudge J."/>
            <person name="Nguyen C."/>
            <person name="Nicol R."/>
            <person name="O'Leary S.B."/>
            <person name="Osoegawa K."/>
            <person name="Schwartz D.C."/>
            <person name="Shaw-Smith C."/>
            <person name="Stankiewicz P."/>
            <person name="Steward C."/>
            <person name="Swarbreck D."/>
            <person name="Venkataraman V."/>
            <person name="Whittaker C.A."/>
            <person name="Yang X."/>
            <person name="Zimmer A.R."/>
            <person name="Bradley A."/>
            <person name="Hubbard T."/>
            <person name="Birren B.W."/>
            <person name="Rogers J."/>
            <person name="Lander E.S."/>
            <person name="Nusbaum C."/>
        </authorList>
    </citation>
    <scope>NUCLEOTIDE SEQUENCE [LARGE SCALE GENOMIC DNA]</scope>
</reference>
<reference key="4">
    <citation type="submission" date="2005-07" db="EMBL/GenBank/DDBJ databases">
        <authorList>
            <person name="Mural R.J."/>
            <person name="Istrail S."/>
            <person name="Sutton G.G."/>
            <person name="Florea L."/>
            <person name="Halpern A.L."/>
            <person name="Mobarry C.M."/>
            <person name="Lippert R."/>
            <person name="Walenz B."/>
            <person name="Shatkay H."/>
            <person name="Dew I."/>
            <person name="Miller J.R."/>
            <person name="Flanigan M.J."/>
            <person name="Edwards N.J."/>
            <person name="Bolanos R."/>
            <person name="Fasulo D."/>
            <person name="Halldorsson B.V."/>
            <person name="Hannenhalli S."/>
            <person name="Turner R."/>
            <person name="Yooseph S."/>
            <person name="Lu F."/>
            <person name="Nusskern D.R."/>
            <person name="Shue B.C."/>
            <person name="Zheng X.H."/>
            <person name="Zhong F."/>
            <person name="Delcher A.L."/>
            <person name="Huson D.H."/>
            <person name="Kravitz S.A."/>
            <person name="Mouchard L."/>
            <person name="Reinert K."/>
            <person name="Remington K.A."/>
            <person name="Clark A.G."/>
            <person name="Waterman M.S."/>
            <person name="Eichler E.E."/>
            <person name="Adams M.D."/>
            <person name="Hunkapiller M.W."/>
            <person name="Myers E.W."/>
            <person name="Venter J.C."/>
        </authorList>
    </citation>
    <scope>NUCLEOTIDE SEQUENCE [LARGE SCALE GENOMIC DNA]</scope>
</reference>
<reference key="5">
    <citation type="journal article" date="2004" name="Genome Res.">
        <title>The status, quality, and expansion of the NIH full-length cDNA project: the Mammalian Gene Collection (MGC).</title>
        <authorList>
            <consortium name="The MGC Project Team"/>
        </authorList>
    </citation>
    <scope>NUCLEOTIDE SEQUENCE [LARGE SCALE MRNA] (ISOFORM 1)</scope>
    <source>
        <tissue>Testis</tissue>
    </source>
</reference>
<reference key="6">
    <citation type="journal article" date="2004" name="Mol. Biol. Cell">
        <title>Participation of the syntaxin 5/Ykt6/GS28/GS15 SNARE complex in transport from the early/recycling endosome to the trans-Golgi network.</title>
        <authorList>
            <person name="Tai G."/>
            <person name="Lu L."/>
            <person name="Wang T.L."/>
            <person name="Tang B.L."/>
            <person name="Goud B."/>
            <person name="Johannes L."/>
            <person name="Hong W."/>
        </authorList>
    </citation>
    <scope>FUNCTION</scope>
    <scope>SUBCELLULAR LOCATION</scope>
</reference>
<reference key="7">
    <citation type="journal article" date="2005" name="J. Cell Biol.">
        <title>Cog3p depletion blocks vesicle-mediated Golgi retrograde trafficking in HeLa cells.</title>
        <authorList>
            <person name="Zolov S.N."/>
            <person name="Lupashin V.V."/>
        </authorList>
    </citation>
    <scope>SUBCELLULAR LOCATION</scope>
</reference>
<reference key="8">
    <citation type="journal article" date="2007" name="Traffic">
        <title>Low-temperature-induced Golgi tubules are transient membranes enriched in molecules regulating intra-Golgi transport.</title>
        <authorList>
            <person name="Martinez-Alonso E."/>
            <person name="Ballesta J."/>
            <person name="Martinez-Menarguez J.A."/>
        </authorList>
    </citation>
    <scope>SUBCELLULAR LOCATION</scope>
</reference>
<reference key="9">
    <citation type="journal article" date="2007" name="Am. J. Physiol.">
        <title>Dysfunction of Golgi tethers, SNAREs, and SNAPs in monocrotaline-induced pulmonary hypertension.</title>
        <authorList>
            <person name="Sehgal P.B."/>
            <person name="Mukhopadhyay S."/>
            <person name="Xu F."/>
            <person name="Patel K."/>
            <person name="Shah M."/>
        </authorList>
    </citation>
    <scope>SUBCELLULAR LOCATION</scope>
    <scope>INDUCTION BY MONOCROTALINE</scope>
</reference>
<reference key="10">
    <citation type="journal article" date="2009" name="Science">
        <title>Lysine acetylation targets protein complexes and co-regulates major cellular functions.</title>
        <authorList>
            <person name="Choudhary C."/>
            <person name="Kumar C."/>
            <person name="Gnad F."/>
            <person name="Nielsen M.L."/>
            <person name="Rehman M."/>
            <person name="Walther T.C."/>
            <person name="Olsen J.V."/>
            <person name="Mann M."/>
        </authorList>
    </citation>
    <scope>IDENTIFICATION BY MASS SPECTROMETRY [LARGE SCALE ANALYSIS]</scope>
</reference>
<reference key="11">
    <citation type="journal article" date="2011" name="BMC Syst. Biol.">
        <title>Initial characterization of the human central proteome.</title>
        <authorList>
            <person name="Burkard T.R."/>
            <person name="Planyavsky M."/>
            <person name="Kaupe I."/>
            <person name="Breitwieser F.P."/>
            <person name="Buerckstuemmer T."/>
            <person name="Bennett K.L."/>
            <person name="Superti-Furga G."/>
            <person name="Colinge J."/>
        </authorList>
    </citation>
    <scope>IDENTIFICATION BY MASS SPECTROMETRY [LARGE SCALE ANALYSIS]</scope>
</reference>
<reference key="12">
    <citation type="journal article" date="2011" name="Exp. Cell Res.">
        <title>OSBP-related protein 7 interacts with GATE-16 and negatively regulates GS28 protein stability.</title>
        <authorList>
            <person name="Zhong W."/>
            <person name="Zhou Y."/>
            <person name="Li S."/>
            <person name="Zhou T."/>
            <person name="Ma H."/>
            <person name="Wei K."/>
            <person name="Li H."/>
            <person name="Olkkonen V.M."/>
            <person name="Yan D."/>
        </authorList>
    </citation>
    <scope>SUBCELLULAR LOCATION</scope>
    <scope>INDUCTION BY OSBPL7</scope>
</reference>
<reference key="13">
    <citation type="journal article" date="2011" name="Korean J. Physiol. Pharmacol.">
        <title>GS28 protects neuronal cell death induced by hydrogen peroxide under glutathione-depleted condition.</title>
        <authorList>
            <person name="Lee H.O."/>
            <person name="Byun Y.J."/>
            <person name="Cho K.O."/>
            <person name="Kim S.Y."/>
            <person name="Lee S.B."/>
            <person name="Kim H.S."/>
            <person name="Kwon O.J."/>
            <person name="Jeong S.W."/>
        </authorList>
    </citation>
    <scope>FUNCTION</scope>
    <scope>INDUCTION</scope>
</reference>
<reference key="14">
    <citation type="journal article" date="2012" name="Mol. Cell. Proteomics">
        <title>Comparative large-scale characterisation of plant vs. mammal proteins reveals similar and idiosyncratic N-alpha acetylation features.</title>
        <authorList>
            <person name="Bienvenut W.V."/>
            <person name="Sumpton D."/>
            <person name="Martinez A."/>
            <person name="Lilla S."/>
            <person name="Espagne C."/>
            <person name="Meinnel T."/>
            <person name="Giglione C."/>
        </authorList>
    </citation>
    <scope>ACETYLATION [LARGE SCALE ANALYSIS] AT ALA-2</scope>
    <scope>CLEAVAGE OF INITIATOR METHIONINE [LARGE SCALE ANALYSIS]</scope>
    <scope>IDENTIFICATION BY MASS SPECTROMETRY [LARGE SCALE ANALYSIS]</scope>
</reference>
<reference key="15">
    <citation type="journal article" date="2013" name="J. Proteome Res.">
        <title>Toward a comprehensive characterization of a human cancer cell phosphoproteome.</title>
        <authorList>
            <person name="Zhou H."/>
            <person name="Di Palma S."/>
            <person name="Preisinger C."/>
            <person name="Peng M."/>
            <person name="Polat A.N."/>
            <person name="Heck A.J."/>
            <person name="Mohammed S."/>
        </authorList>
    </citation>
    <scope>PHOSPHORYLATION [LARGE SCALE ANALYSIS] AT SER-141</scope>
    <scope>IDENTIFICATION BY MASS SPECTROMETRY [LARGE SCALE ANALYSIS]</scope>
    <source>
        <tissue>Erythroleukemia</tissue>
    </source>
</reference>
<reference key="16">
    <citation type="journal article" date="2015" name="Proteomics">
        <title>N-terminome analysis of the human mitochondrial proteome.</title>
        <authorList>
            <person name="Vaca Jacome A.S."/>
            <person name="Rabilloud T."/>
            <person name="Schaeffer-Reiss C."/>
            <person name="Rompais M."/>
            <person name="Ayoub D."/>
            <person name="Lane L."/>
            <person name="Bairoch A."/>
            <person name="Van Dorsselaer A."/>
            <person name="Carapito C."/>
        </authorList>
    </citation>
    <scope>ACETYLATION [LARGE SCALE ANALYSIS] AT ALA-2</scope>
    <scope>CLEAVAGE OF INITIATOR METHIONINE [LARGE SCALE ANALYSIS]</scope>
    <scope>IDENTIFICATION BY MASS SPECTROMETRY [LARGE SCALE ANALYSIS]</scope>
</reference>
<gene>
    <name type="primary">GOSR1</name>
    <name type="synonym">GS28</name>
</gene>
<feature type="initiator methionine" description="Removed" evidence="11 13">
    <location>
        <position position="1"/>
    </location>
</feature>
<feature type="chain" id="PRO_0000212542" description="Golgi SNAP receptor complex member 1">
    <location>
        <begin position="2"/>
        <end position="250"/>
    </location>
</feature>
<feature type="topological domain" description="Cytoplasmic" evidence="2">
    <location>
        <begin position="2"/>
        <end position="229"/>
    </location>
</feature>
<feature type="transmembrane region" description="Helical; Anchor for type IV membrane protein" evidence="2">
    <location>
        <begin position="230"/>
        <end position="250"/>
    </location>
</feature>
<feature type="region of interest" description="Disordered" evidence="3">
    <location>
        <begin position="38"/>
        <end position="59"/>
    </location>
</feature>
<feature type="coiled-coil region" evidence="2">
    <location>
        <begin position="9"/>
        <end position="30"/>
    </location>
</feature>
<feature type="coiled-coil region" evidence="2">
    <location>
        <begin position="68"/>
        <end position="95"/>
    </location>
</feature>
<feature type="compositionally biased region" description="Basic and acidic residues" evidence="3">
    <location>
        <begin position="41"/>
        <end position="51"/>
    </location>
</feature>
<feature type="modified residue" description="N-acetylalanine" evidence="11 13">
    <location>
        <position position="2"/>
    </location>
</feature>
<feature type="modified residue" description="Phosphoserine" evidence="12">
    <location>
        <position position="141"/>
    </location>
</feature>
<feature type="splice variant" id="VSP_047326" description="In isoform 2." evidence="10">
    <location>
        <begin position="1"/>
        <end position="65"/>
    </location>
</feature>
<feature type="sequence conflict" description="In Ref. 1; AAC39889." evidence="10" ref="1">
    <original>D</original>
    <variation>GEARRPPD</variation>
    <location>
        <position position="11"/>
    </location>
</feature>
<feature type="sequence conflict" description="In Ref. 1; AAC39889." evidence="10" ref="1">
    <location>
        <begin position="49"/>
        <end position="50"/>
    </location>
</feature>
<feature type="sequence conflict" description="In Ref. 1; AAC39889." evidence="10" ref="1">
    <original>NN</original>
    <variation>TT</variation>
    <location>
        <begin position="156"/>
        <end position="157"/>
    </location>
</feature>
<feature type="sequence conflict" description="In Ref. 1; AAC39889." evidence="10" ref="1">
    <original>R</original>
    <variation>G</variation>
    <location>
        <position position="159"/>
    </location>
</feature>
<feature type="sequence conflict" description="In Ref. 1; AAC39889." evidence="10" ref="1">
    <original>L</original>
    <variation>F</variation>
    <location>
        <position position="170"/>
    </location>
</feature>
<proteinExistence type="evidence at protein level"/>
<accession>O95249</accession>
<accession>J3KST5</accession>
<accession>O75392</accession>
<organism>
    <name type="scientific">Homo sapiens</name>
    <name type="common">Human</name>
    <dbReference type="NCBI Taxonomy" id="9606"/>
    <lineage>
        <taxon>Eukaryota</taxon>
        <taxon>Metazoa</taxon>
        <taxon>Chordata</taxon>
        <taxon>Craniata</taxon>
        <taxon>Vertebrata</taxon>
        <taxon>Euteleostomi</taxon>
        <taxon>Mammalia</taxon>
        <taxon>Eutheria</taxon>
        <taxon>Euarchontoglires</taxon>
        <taxon>Primates</taxon>
        <taxon>Haplorrhini</taxon>
        <taxon>Catarrhini</taxon>
        <taxon>Hominidae</taxon>
        <taxon>Homo</taxon>
    </lineage>
</organism>
<name>GOSR1_HUMAN</name>